<dbReference type="EC" id="2.4.1.16" evidence="8"/>
<dbReference type="EMBL" id="JH226136">
    <property type="protein sequence ID" value="EHY60006.1"/>
    <property type="molecule type" value="Genomic_DNA"/>
</dbReference>
<dbReference type="RefSeq" id="XP_009160467.1">
    <property type="nucleotide sequence ID" value="XM_009162219.1"/>
</dbReference>
<dbReference type="SMR" id="H6CA42"/>
<dbReference type="FunCoup" id="H6CA42">
    <property type="interactions" value="77"/>
</dbReference>
<dbReference type="STRING" id="858893.H6CA42"/>
<dbReference type="GeneID" id="20312620"/>
<dbReference type="VEuPathDB" id="FungiDB:HMPREF1120_07981"/>
<dbReference type="eggNOG" id="KOG2571">
    <property type="taxonomic scope" value="Eukaryota"/>
</dbReference>
<dbReference type="HOGENOM" id="CLU_004760_1_1_1"/>
<dbReference type="InParanoid" id="H6CA42"/>
<dbReference type="OMA" id="TTMRETE"/>
<dbReference type="OrthoDB" id="4074at5583"/>
<dbReference type="Proteomes" id="UP000007304">
    <property type="component" value="Unassembled WGS sequence"/>
</dbReference>
<dbReference type="GO" id="GO:0030428">
    <property type="term" value="C:cell septum"/>
    <property type="evidence" value="ECO:0007669"/>
    <property type="project" value="TreeGrafter"/>
</dbReference>
<dbReference type="GO" id="GO:0005886">
    <property type="term" value="C:plasma membrane"/>
    <property type="evidence" value="ECO:0007669"/>
    <property type="project" value="UniProtKB-SubCell"/>
</dbReference>
<dbReference type="GO" id="GO:0004100">
    <property type="term" value="F:chitin synthase activity"/>
    <property type="evidence" value="ECO:0007669"/>
    <property type="project" value="UniProtKB-EC"/>
</dbReference>
<dbReference type="GO" id="GO:0006031">
    <property type="term" value="P:chitin biosynthetic process"/>
    <property type="evidence" value="ECO:0007669"/>
    <property type="project" value="InterPro"/>
</dbReference>
<dbReference type="CDD" id="cd04190">
    <property type="entry name" value="Chitin_synth_C"/>
    <property type="match status" value="1"/>
</dbReference>
<dbReference type="InterPro" id="IPR023298">
    <property type="entry name" value="ATPase_P-typ_TM_dom_sf"/>
</dbReference>
<dbReference type="InterPro" id="IPR004835">
    <property type="entry name" value="Chitin_synth"/>
</dbReference>
<dbReference type="InterPro" id="IPR004834">
    <property type="entry name" value="Chitin_synth_fun"/>
</dbReference>
<dbReference type="InterPro" id="IPR013616">
    <property type="entry name" value="Chitin_synth_N"/>
</dbReference>
<dbReference type="InterPro" id="IPR001173">
    <property type="entry name" value="Glyco_trans_2-like"/>
</dbReference>
<dbReference type="InterPro" id="IPR029044">
    <property type="entry name" value="Nucleotide-diphossugar_trans"/>
</dbReference>
<dbReference type="PANTHER" id="PTHR22914">
    <property type="entry name" value="CHITIN SYNTHASE"/>
    <property type="match status" value="1"/>
</dbReference>
<dbReference type="PANTHER" id="PTHR22914:SF38">
    <property type="entry name" value="CHITIN SYNTHASE 2"/>
    <property type="match status" value="1"/>
</dbReference>
<dbReference type="Pfam" id="PF01644">
    <property type="entry name" value="Chitin_synth_1"/>
    <property type="match status" value="1"/>
</dbReference>
<dbReference type="Pfam" id="PF08407">
    <property type="entry name" value="Chitin_synth_1N"/>
    <property type="match status" value="1"/>
</dbReference>
<dbReference type="Pfam" id="PF13632">
    <property type="entry name" value="Glyco_trans_2_3"/>
    <property type="match status" value="1"/>
</dbReference>
<dbReference type="SUPFAM" id="SSF81665">
    <property type="entry name" value="Calcium ATPase, transmembrane domain M"/>
    <property type="match status" value="1"/>
</dbReference>
<dbReference type="SUPFAM" id="SSF53448">
    <property type="entry name" value="Nucleotide-diphospho-sugar transferases"/>
    <property type="match status" value="1"/>
</dbReference>
<gene>
    <name evidence="6" type="primary">CHS1</name>
    <name type="ORF">HMPREF1120_07981</name>
</gene>
<proteinExistence type="evidence at transcript level"/>
<comment type="function">
    <text evidence="5 8">Polymerizes chitin, a structural polymer of the cell wall and septum, by transferring the sugar moiety of UDP-GlcNAc to the non-reducing end of the growing chitin polymer (Probable). CHS1 mainly responsible for normal yeast cell reproductive growth (PubMed:16544168).</text>
</comment>
<comment type="catalytic activity">
    <reaction evidence="8">
        <text>[(1-&gt;4)-N-acetyl-beta-D-glucosaminyl](n) + UDP-N-acetyl-alpha-D-glucosamine = [(1-&gt;4)-N-acetyl-beta-D-glucosaminyl](n+1) + UDP + H(+)</text>
        <dbReference type="Rhea" id="RHEA:16637"/>
        <dbReference type="Rhea" id="RHEA-COMP:9593"/>
        <dbReference type="Rhea" id="RHEA-COMP:9595"/>
        <dbReference type="ChEBI" id="CHEBI:15378"/>
        <dbReference type="ChEBI" id="CHEBI:17029"/>
        <dbReference type="ChEBI" id="CHEBI:57705"/>
        <dbReference type="ChEBI" id="CHEBI:58223"/>
        <dbReference type="EC" id="2.4.1.16"/>
    </reaction>
    <physiologicalReaction direction="left-to-right" evidence="8">
        <dbReference type="Rhea" id="RHEA:16638"/>
    </physiologicalReaction>
</comment>
<comment type="subcellular location">
    <subcellularLocation>
        <location evidence="7">Cell membrane</location>
        <topology evidence="1">Multi-pass membrane protein</topology>
    </subcellularLocation>
</comment>
<comment type="induction">
    <text evidence="4">The expression levels changes little with temperature change, regardless of whether the exposure to the higher temperature is for 3 h or 24 h.</text>
</comment>
<comment type="disruption phenotype">
    <text evidence="4 5">Leads to strains that are hyperpigmented in rich media (PubMed:16544168). Does not affect growth rate at both 25 and 37 degrees Celsius nor the virulence in a mouse model (PubMed:16544168). Affects the separation of yeast cells with enriched chitin in septal regions and increases the frequency of enlarged cells with multiple nuclei (PubMed:16544168). Leads to increased expression of CHS2 for compensation (PubMed:12213927).</text>
</comment>
<comment type="similarity">
    <text evidence="7">Belongs to the chitin synthase family. Class II subfamily.</text>
</comment>
<protein>
    <recommendedName>
        <fullName evidence="6">Chitin synthase 1</fullName>
        <ecNumber evidence="8">2.4.1.16</ecNumber>
    </recommendedName>
    <alternativeName>
        <fullName evidence="7">Chitin-UDP acetyl-glucosaminyl transferase 1</fullName>
    </alternativeName>
    <alternativeName>
        <fullName evidence="6">Class-II chitin synthase 1</fullName>
    </alternativeName>
</protein>
<evidence type="ECO:0000255" key="1"/>
<evidence type="ECO:0000255" key="2">
    <source>
        <dbReference type="PROSITE-ProRule" id="PRU00498"/>
    </source>
</evidence>
<evidence type="ECO:0000256" key="3">
    <source>
        <dbReference type="SAM" id="MobiDB-lite"/>
    </source>
</evidence>
<evidence type="ECO:0000269" key="4">
    <source>
    </source>
</evidence>
<evidence type="ECO:0000269" key="5">
    <source>
    </source>
</evidence>
<evidence type="ECO:0000303" key="6">
    <source>
    </source>
</evidence>
<evidence type="ECO:0000305" key="7"/>
<evidence type="ECO:0000305" key="8">
    <source>
    </source>
</evidence>
<name>CHS1_EXODN</name>
<keyword id="KW-1003">Cell membrane</keyword>
<keyword id="KW-0325">Glycoprotein</keyword>
<keyword id="KW-0328">Glycosyltransferase</keyword>
<keyword id="KW-0472">Membrane</keyword>
<keyword id="KW-1185">Reference proteome</keyword>
<keyword id="KW-0808">Transferase</keyword>
<keyword id="KW-0812">Transmembrane</keyword>
<keyword id="KW-1133">Transmembrane helix</keyword>
<feature type="chain" id="PRO_0000460785" description="Chitin synthase 1">
    <location>
        <begin position="1"/>
        <end position="1036"/>
    </location>
</feature>
<feature type="transmembrane region" description="Helical" evidence="1">
    <location>
        <begin position="659"/>
        <end position="679"/>
    </location>
</feature>
<feature type="transmembrane region" description="Helical" evidence="1">
    <location>
        <begin position="699"/>
        <end position="719"/>
    </location>
</feature>
<feature type="transmembrane region" description="Helical" evidence="1">
    <location>
        <begin position="733"/>
        <end position="753"/>
    </location>
</feature>
<feature type="transmembrane region" description="Helical" evidence="1">
    <location>
        <begin position="776"/>
        <end position="796"/>
    </location>
</feature>
<feature type="transmembrane region" description="Helical" evidence="1">
    <location>
        <begin position="808"/>
        <end position="828"/>
    </location>
</feature>
<feature type="transmembrane region" description="Helical" evidence="1">
    <location>
        <begin position="908"/>
        <end position="928"/>
    </location>
</feature>
<feature type="transmembrane region" description="Helical" evidence="1">
    <location>
        <begin position="945"/>
        <end position="967"/>
    </location>
</feature>
<feature type="region of interest" description="Disordered" evidence="3">
    <location>
        <begin position="1"/>
        <end position="153"/>
    </location>
</feature>
<feature type="region of interest" description="Disordered" evidence="3">
    <location>
        <begin position="189"/>
        <end position="229"/>
    </location>
</feature>
<feature type="region of interest" description="Disordered" evidence="3">
    <location>
        <begin position="994"/>
        <end position="1019"/>
    </location>
</feature>
<feature type="compositionally biased region" description="Pro residues" evidence="3">
    <location>
        <begin position="1"/>
        <end position="10"/>
    </location>
</feature>
<feature type="compositionally biased region" description="Low complexity" evidence="3">
    <location>
        <begin position="86"/>
        <end position="108"/>
    </location>
</feature>
<feature type="compositionally biased region" description="Polar residues" evidence="3">
    <location>
        <begin position="194"/>
        <end position="203"/>
    </location>
</feature>
<feature type="compositionally biased region" description="Low complexity" evidence="3">
    <location>
        <begin position="1001"/>
        <end position="1019"/>
    </location>
</feature>
<feature type="glycosylation site" description="N-linked (GlcNAc...) asparagine" evidence="2">
    <location>
        <position position="38"/>
    </location>
</feature>
<feature type="glycosylation site" description="N-linked (GlcNAc...) asparagine" evidence="2">
    <location>
        <position position="179"/>
    </location>
</feature>
<organism>
    <name type="scientific">Exophiala dermatitidis (strain ATCC 34100 / CBS 525.76 / NIH/UT8656)</name>
    <name type="common">Black yeast</name>
    <name type="synonym">Wangiella dermatitidis</name>
    <dbReference type="NCBI Taxonomy" id="858893"/>
    <lineage>
        <taxon>Eukaryota</taxon>
        <taxon>Fungi</taxon>
        <taxon>Dikarya</taxon>
        <taxon>Ascomycota</taxon>
        <taxon>Pezizomycotina</taxon>
        <taxon>Eurotiomycetes</taxon>
        <taxon>Chaetothyriomycetidae</taxon>
        <taxon>Chaetothyriales</taxon>
        <taxon>Herpotrichiellaceae</taxon>
        <taxon>Exophiala</taxon>
    </lineage>
</organism>
<reference key="1">
    <citation type="submission" date="2011-07" db="EMBL/GenBank/DDBJ databases">
        <title>The Genome Sequence of Exophiala (Wangiella) dermatitidis NIH/UT8656.</title>
        <authorList>
            <consortium name="The Broad Institute Genome Sequencing Platform"/>
            <person name="Cuomo C."/>
            <person name="Wang Z."/>
            <person name="Hunicke-Smith S."/>
            <person name="Szanislo P.J."/>
            <person name="Earl A."/>
            <person name="Young S.K."/>
            <person name="Zeng Q."/>
            <person name="Gargeya S."/>
            <person name="Fitzgerald M."/>
            <person name="Haas B."/>
            <person name="Abouelleil A."/>
            <person name="Alvarado L."/>
            <person name="Arachchi H.M."/>
            <person name="Berlin A."/>
            <person name="Brown A."/>
            <person name="Chapman S.B."/>
            <person name="Chen Z."/>
            <person name="Dunbar C."/>
            <person name="Freedman E."/>
            <person name="Gearin G."/>
            <person name="Gellesch M."/>
            <person name="Goldberg J."/>
            <person name="Griggs A."/>
            <person name="Gujja S."/>
            <person name="Heiman D."/>
            <person name="Howarth C."/>
            <person name="Larson L."/>
            <person name="Lui A."/>
            <person name="MacDonald P.J.P."/>
            <person name="Montmayeur A."/>
            <person name="Murphy C."/>
            <person name="Neiman D."/>
            <person name="Pearson M."/>
            <person name="Priest M."/>
            <person name="Roberts A."/>
            <person name="Saif S."/>
            <person name="Shea T."/>
            <person name="Shenoy N."/>
            <person name="Sisk P."/>
            <person name="Stolte C."/>
            <person name="Sykes S."/>
            <person name="Wortman J."/>
            <person name="Nusbaum C."/>
            <person name="Birren B."/>
        </authorList>
    </citation>
    <scope>NUCLEOTIDE SEQUENCE [LARGE SCALE GENOMIC DNA]</scope>
    <source>
        <strain>ATCC 34100 / CBS 525.76 / NIH/UT8656</strain>
    </source>
</reference>
<reference key="2">
    <citation type="journal article" date="2002" name="Microbiology">
        <title>Compensatory expression of five chitin synthase genes, a response to stress stimuli, in Wangiella (Exophiala) dermatitidis, a melanized fungal pathogen of humans.</title>
        <authorList>
            <person name="Wang Q."/>
            <person name="Liu H."/>
            <person name="Szaniszlo P.J."/>
        </authorList>
    </citation>
    <scope>INDUCTION</scope>
    <scope>DISRUPTION PHENOTYPE</scope>
</reference>
<reference key="3">
    <citation type="journal article" date="2006" name="Arch. Microbiol.">
        <title>WdChs1p, a class II chitin synthase, is more responsible than WdChs2p (Class I) for normal yeast reproductive growth in the polymorphic, pathogenic fungus Wangiella (Exophiala) dermatitidis.</title>
        <authorList>
            <person name="Zheng L."/>
            <person name="Mendoza L."/>
            <person name="Wang Z."/>
            <person name="Liu H."/>
            <person name="Park C."/>
            <person name="Kauffman S."/>
            <person name="Becker J.M."/>
            <person name="Szaniszlo P.J."/>
        </authorList>
    </citation>
    <scope>FUNCTION</scope>
    <scope>DISRUPTION PHENOTYPE</scope>
</reference>
<accession>H6CA42</accession>
<sequence>MDGPPSPTRVPPSYTDGPPSYVDTPIADEDTMSVPGNNSSLRLLPQGQDEYRSISPPNRVSPDRYHRPAASTAYSSRPGSSLGRAPSIPLSSSNPRSPIRPSTPSRVSTDWTRPPAPSVAYEPPDINGSPRPGTPSSQYGGSPRRPLPPAPLFSAKGAAAETTIPMPEPESENDVFVDNYSIMPDNDPRASLKSAHSYTTDSTFTEDDDITNEKLNHYGPAPEGRQDRRGLREAQMTKKEVRLINGELILECKIPTILHSFLPRRDEREFTHMRYTAVTCDPDDFVVKGYKLRQNIGPTMRETELFICVTMYNEGEIEFTRTMHGIMRNIAHFCSRTRSRTWGKDGWQKIVVCVIADGRQKVHPRTLNALAAMGVYQDGIAKNVVNQKEVTAHVYEYTTQVSLDETLKFKGAEKGIVPCQMIFCLKEKNKKKLNSHRWFFNAFGRALIPNVCILLDVGTKPDSKALYHLWKAFDQNSNVAGAAGEIKADKGKGWLGLLNPLVASQNFEYKISNILDKPLESVFGYITVLPGALSAYRYHALQNDPSGHGPLSQYFKGETLHGRDADVFTANMYLAEDRILCWELVAKRDEQWVLKFVKSAYGETDVPDTVPEFISQRRRWLNGAFFAAVYALVHFKQIWRTDHSLTRKILLHIEFIYQFISLLFTFFSLANFYLTFYFVAGSLADPTIDPFGHNIGKYIFVILRYVCVLLICLQFILSLGNRPQGAKKLFLSTMVTYSIIMAYTTFASVYIVIKQLTTHALEKTDPNNPYKLGNNIFTNLIVSSVSTIGLFFLMSFLYLDPWHMFTSSAQYFALLPSYICTLQVYAFCNTHDVTWGTKGDNVMHTDLGAAKAIGSGNTVEVEMPSEQLDIDSAYDVALRNLRDRVEVPKPPVSENQLQEDYYKSVRTYVVASYMVCNAILAMAVSEAYPVGSHIGSNFYLTFILWSVAALALFRAIGSSAFGVINIVSAIAEGRIQAKFERIFGGGDERGRHRAGLGSGFSESGKTGITSGSGMSGMSLSDVTSKISEKFSWMSGK</sequence>